<name>HBB_BOSMU</name>
<gene>
    <name type="primary">HBB</name>
</gene>
<keyword id="KW-0007">Acetylation</keyword>
<keyword id="KW-0903">Direct protein sequencing</keyword>
<keyword id="KW-0349">Heme</keyword>
<keyword id="KW-0408">Iron</keyword>
<keyword id="KW-0479">Metal-binding</keyword>
<keyword id="KW-0561">Oxygen transport</keyword>
<keyword id="KW-0597">Phosphoprotein</keyword>
<keyword id="KW-1185">Reference proteome</keyword>
<keyword id="KW-0702">S-nitrosylation</keyword>
<keyword id="KW-0813">Transport</keyword>
<accession>P02072</accession>
<accession>A1BMY9</accession>
<organism>
    <name type="scientific">Bos mutus grunniens</name>
    <name type="common">Wild yak</name>
    <name type="synonym">Bos grunniens</name>
    <dbReference type="NCBI Taxonomy" id="30521"/>
    <lineage>
        <taxon>Eukaryota</taxon>
        <taxon>Metazoa</taxon>
        <taxon>Chordata</taxon>
        <taxon>Craniata</taxon>
        <taxon>Vertebrata</taxon>
        <taxon>Euteleostomi</taxon>
        <taxon>Mammalia</taxon>
        <taxon>Eutheria</taxon>
        <taxon>Laurasiatheria</taxon>
        <taxon>Artiodactyla</taxon>
        <taxon>Ruminantia</taxon>
        <taxon>Pecora</taxon>
        <taxon>Bovidae</taxon>
        <taxon>Bovinae</taxon>
        <taxon>Bos</taxon>
    </lineage>
</organism>
<dbReference type="EMBL" id="DQ277007">
    <property type="protein sequence ID" value="ABB91431.1"/>
    <property type="molecule type" value="mRNA"/>
</dbReference>
<dbReference type="PIR" id="A02390">
    <property type="entry name" value="HBYA2"/>
</dbReference>
<dbReference type="SMR" id="P02072"/>
<dbReference type="Proteomes" id="UP000694520">
    <property type="component" value="Unplaced"/>
</dbReference>
<dbReference type="GO" id="GO:0072562">
    <property type="term" value="C:blood microparticle"/>
    <property type="evidence" value="ECO:0007669"/>
    <property type="project" value="TreeGrafter"/>
</dbReference>
<dbReference type="GO" id="GO:0031838">
    <property type="term" value="C:haptoglobin-hemoglobin complex"/>
    <property type="evidence" value="ECO:0007669"/>
    <property type="project" value="TreeGrafter"/>
</dbReference>
<dbReference type="GO" id="GO:0005833">
    <property type="term" value="C:hemoglobin complex"/>
    <property type="evidence" value="ECO:0007669"/>
    <property type="project" value="InterPro"/>
</dbReference>
<dbReference type="GO" id="GO:0031720">
    <property type="term" value="F:haptoglobin binding"/>
    <property type="evidence" value="ECO:0007669"/>
    <property type="project" value="TreeGrafter"/>
</dbReference>
<dbReference type="GO" id="GO:0020037">
    <property type="term" value="F:heme binding"/>
    <property type="evidence" value="ECO:0007669"/>
    <property type="project" value="InterPro"/>
</dbReference>
<dbReference type="GO" id="GO:0031721">
    <property type="term" value="F:hemoglobin alpha binding"/>
    <property type="evidence" value="ECO:0007669"/>
    <property type="project" value="TreeGrafter"/>
</dbReference>
<dbReference type="GO" id="GO:0046872">
    <property type="term" value="F:metal ion binding"/>
    <property type="evidence" value="ECO:0007669"/>
    <property type="project" value="UniProtKB-KW"/>
</dbReference>
<dbReference type="GO" id="GO:0043177">
    <property type="term" value="F:organic acid binding"/>
    <property type="evidence" value="ECO:0007669"/>
    <property type="project" value="TreeGrafter"/>
</dbReference>
<dbReference type="GO" id="GO:0019825">
    <property type="term" value="F:oxygen binding"/>
    <property type="evidence" value="ECO:0007669"/>
    <property type="project" value="InterPro"/>
</dbReference>
<dbReference type="GO" id="GO:0005344">
    <property type="term" value="F:oxygen carrier activity"/>
    <property type="evidence" value="ECO:0007669"/>
    <property type="project" value="UniProtKB-KW"/>
</dbReference>
<dbReference type="GO" id="GO:0004601">
    <property type="term" value="F:peroxidase activity"/>
    <property type="evidence" value="ECO:0007669"/>
    <property type="project" value="TreeGrafter"/>
</dbReference>
<dbReference type="GO" id="GO:0042744">
    <property type="term" value="P:hydrogen peroxide catabolic process"/>
    <property type="evidence" value="ECO:0007669"/>
    <property type="project" value="TreeGrafter"/>
</dbReference>
<dbReference type="CDD" id="cd08925">
    <property type="entry name" value="Hb-beta-like"/>
    <property type="match status" value="1"/>
</dbReference>
<dbReference type="FunFam" id="1.10.490.10:FF:000001">
    <property type="entry name" value="Hemoglobin subunit beta"/>
    <property type="match status" value="1"/>
</dbReference>
<dbReference type="Gene3D" id="1.10.490.10">
    <property type="entry name" value="Globins"/>
    <property type="match status" value="1"/>
</dbReference>
<dbReference type="InterPro" id="IPR000971">
    <property type="entry name" value="Globin"/>
</dbReference>
<dbReference type="InterPro" id="IPR009050">
    <property type="entry name" value="Globin-like_sf"/>
</dbReference>
<dbReference type="InterPro" id="IPR012292">
    <property type="entry name" value="Globin/Proto"/>
</dbReference>
<dbReference type="InterPro" id="IPR002337">
    <property type="entry name" value="Hemoglobin_b"/>
</dbReference>
<dbReference type="InterPro" id="IPR050056">
    <property type="entry name" value="Hemoglobin_oxygen_transport"/>
</dbReference>
<dbReference type="PANTHER" id="PTHR11442">
    <property type="entry name" value="HEMOGLOBIN FAMILY MEMBER"/>
    <property type="match status" value="1"/>
</dbReference>
<dbReference type="PANTHER" id="PTHR11442:SF42">
    <property type="entry name" value="HEMOGLOBIN SUBUNIT BETA"/>
    <property type="match status" value="1"/>
</dbReference>
<dbReference type="Pfam" id="PF00042">
    <property type="entry name" value="Globin"/>
    <property type="match status" value="1"/>
</dbReference>
<dbReference type="PRINTS" id="PR00814">
    <property type="entry name" value="BETAHAEM"/>
</dbReference>
<dbReference type="SUPFAM" id="SSF46458">
    <property type="entry name" value="Globin-like"/>
    <property type="match status" value="1"/>
</dbReference>
<dbReference type="PROSITE" id="PS01033">
    <property type="entry name" value="GLOBIN"/>
    <property type="match status" value="1"/>
</dbReference>
<evidence type="ECO:0000250" key="1">
    <source>
        <dbReference type="UniProtKB" id="P68871"/>
    </source>
</evidence>
<evidence type="ECO:0000255" key="2">
    <source>
        <dbReference type="PROSITE-ProRule" id="PRU00238"/>
    </source>
</evidence>
<evidence type="ECO:0000269" key="3">
    <source>
    </source>
</evidence>
<evidence type="ECO:0000305" key="4"/>
<feature type="chain" id="PRO_0000052891" description="Hemoglobin subunit beta">
    <location>
        <begin position="1"/>
        <end position="145"/>
    </location>
</feature>
<feature type="domain" description="Globin" evidence="2">
    <location>
        <begin position="1"/>
        <end position="145"/>
    </location>
</feature>
<feature type="binding site" description="distal binding residue">
    <location>
        <position position="62"/>
    </location>
    <ligand>
        <name>heme b</name>
        <dbReference type="ChEBI" id="CHEBI:60344"/>
    </ligand>
    <ligandPart>
        <name>Fe</name>
        <dbReference type="ChEBI" id="CHEBI:18248"/>
    </ligandPart>
</feature>
<feature type="binding site" description="proximal binding residue">
    <location>
        <position position="91"/>
    </location>
    <ligand>
        <name>heme b</name>
        <dbReference type="ChEBI" id="CHEBI:60344"/>
    </ligand>
    <ligandPart>
        <name>Fe</name>
        <dbReference type="ChEBI" id="CHEBI:18248"/>
    </ligandPart>
</feature>
<feature type="modified residue" description="Phosphothreonine" evidence="1">
    <location>
        <position position="11"/>
    </location>
</feature>
<feature type="modified residue" description="Phosphoserine" evidence="1">
    <location>
        <position position="43"/>
    </location>
</feature>
<feature type="modified residue" description="N6-acetyllysine" evidence="1">
    <location>
        <position position="58"/>
    </location>
</feature>
<feature type="modified residue" description="N6-acetyllysine" evidence="1">
    <location>
        <position position="81"/>
    </location>
</feature>
<feature type="modified residue" description="S-nitrosocysteine" evidence="1">
    <location>
        <position position="92"/>
    </location>
</feature>
<feature type="sequence variant" description="In allele beta-I." evidence="3">
    <original>S</original>
    <variation>T</variation>
    <location>
        <position position="49"/>
    </location>
</feature>
<feature type="sequence variant" description="In allele beta-I." evidence="3">
    <original>H</original>
    <variation>N</variation>
    <location>
        <position position="116"/>
    </location>
</feature>
<feature type="sequence variant" description="In allele beta-I." evidence="3">
    <original>V</original>
    <variation>A</variation>
    <location>
        <position position="134"/>
    </location>
</feature>
<feature type="sequence conflict" description="In Ref. 2; ABB91431." evidence="4" ref="2">
    <original>V</original>
    <variation>N</variation>
    <location>
        <position position="134"/>
    </location>
</feature>
<comment type="function">
    <text>Involved in oxygen transport from the lung to the various peripheral tissues.</text>
</comment>
<comment type="subunit">
    <text>Heterotetramer of two alpha chains and two beta chains.</text>
</comment>
<comment type="tissue specificity">
    <text>Red blood cells.</text>
</comment>
<comment type="polymorphism">
    <text evidence="3">The beta-II allele is shown. It occurs much more frequently than the beta-I allele.</text>
</comment>
<comment type="similarity">
    <text evidence="2">Belongs to the globin family.</text>
</comment>
<reference key="1">
    <citation type="journal article" date="1985" name="Biol. Chem. Hoppe-Seyler">
        <title>Studies on yak hemoglobin (Bos grunniens, Bovidae): structural basis for high intrinsic oxygen affinity?</title>
        <authorList>
            <person name="Lalthantluanga R."/>
            <person name="Wiesner H."/>
            <person name="Braunitzer G."/>
        </authorList>
    </citation>
    <scope>PROTEIN SEQUENCE (ALLELES BETA-I AND BETA-II)</scope>
</reference>
<reference key="2">
    <citation type="submission" date="2005-11" db="EMBL/GenBank/DDBJ databases">
        <title>Cloning and sequencing yak hemoglobin beta globin.</title>
        <authorList>
            <person name="Piao Y."/>
            <person name="Zheng Y."/>
        </authorList>
    </citation>
    <scope>NUCLEOTIDE SEQUENCE [MRNA]</scope>
</reference>
<protein>
    <recommendedName>
        <fullName>Hemoglobin subunit beta</fullName>
    </recommendedName>
    <alternativeName>
        <fullName>Beta-globin</fullName>
    </alternativeName>
    <alternativeName>
        <fullName>Hemoglobin beta chain</fullName>
    </alternativeName>
</protein>
<proteinExistence type="evidence at protein level"/>
<sequence length="145" mass="15991">MLTAEEKAAVTAFWGKVKVDEVGGEALGRLLVVYPWTQRFFESFGDLSSADAVMNNPKVKAHGKKVLDSFSNGMKHLDDLKGTFAALSELHCDKLHVDPENFKLLGNVLVVVLARHFGKEFTPVLQADFQKVVVGVANALAHRYH</sequence>